<dbReference type="EC" id="1.7.99.1" evidence="1"/>
<dbReference type="EMBL" id="CP000687">
    <property type="protein sequence ID" value="ABY70126.1"/>
    <property type="molecule type" value="Genomic_DNA"/>
</dbReference>
<dbReference type="RefSeq" id="WP_009874559.1">
    <property type="nucleotide sequence ID" value="NC_010278.1"/>
</dbReference>
<dbReference type="SMR" id="B0BRE1"/>
<dbReference type="GeneID" id="48599829"/>
<dbReference type="KEGG" id="apj:APJL_1574"/>
<dbReference type="PATRIC" id="fig|416269.6.peg.1610"/>
<dbReference type="HOGENOM" id="CLU_038344_2_0_6"/>
<dbReference type="Proteomes" id="UP000008547">
    <property type="component" value="Chromosome"/>
</dbReference>
<dbReference type="GO" id="GO:0005737">
    <property type="term" value="C:cytoplasm"/>
    <property type="evidence" value="ECO:0007669"/>
    <property type="project" value="UniProtKB-SubCell"/>
</dbReference>
<dbReference type="GO" id="GO:0051537">
    <property type="term" value="F:2 iron, 2 sulfur cluster binding"/>
    <property type="evidence" value="ECO:0007669"/>
    <property type="project" value="UniProtKB-KW"/>
</dbReference>
<dbReference type="GO" id="GO:0050418">
    <property type="term" value="F:hydroxylamine reductase activity"/>
    <property type="evidence" value="ECO:0007669"/>
    <property type="project" value="UniProtKB-UniRule"/>
</dbReference>
<dbReference type="GO" id="GO:0046872">
    <property type="term" value="F:metal ion binding"/>
    <property type="evidence" value="ECO:0007669"/>
    <property type="project" value="UniProtKB-KW"/>
</dbReference>
<dbReference type="GO" id="GO:0004601">
    <property type="term" value="F:peroxidase activity"/>
    <property type="evidence" value="ECO:0007669"/>
    <property type="project" value="TreeGrafter"/>
</dbReference>
<dbReference type="GO" id="GO:0042542">
    <property type="term" value="P:response to hydrogen peroxide"/>
    <property type="evidence" value="ECO:0007669"/>
    <property type="project" value="TreeGrafter"/>
</dbReference>
<dbReference type="FunFam" id="1.20.1270.20:FF:000001">
    <property type="entry name" value="Hydroxylamine reductase"/>
    <property type="match status" value="1"/>
</dbReference>
<dbReference type="FunFam" id="1.20.1270.20:FF:000002">
    <property type="entry name" value="Hydroxylamine reductase"/>
    <property type="match status" value="1"/>
</dbReference>
<dbReference type="FunFam" id="3.40.50.2030:FF:000001">
    <property type="entry name" value="Hydroxylamine reductase"/>
    <property type="match status" value="1"/>
</dbReference>
<dbReference type="FunFam" id="3.40.50.2030:FF:000002">
    <property type="entry name" value="Hydroxylamine reductase"/>
    <property type="match status" value="1"/>
</dbReference>
<dbReference type="Gene3D" id="1.20.1270.20">
    <property type="match status" value="2"/>
</dbReference>
<dbReference type="Gene3D" id="3.40.50.2030">
    <property type="match status" value="2"/>
</dbReference>
<dbReference type="HAMAP" id="MF_00069">
    <property type="entry name" value="Hydroxylam_reduct"/>
    <property type="match status" value="1"/>
</dbReference>
<dbReference type="InterPro" id="IPR004137">
    <property type="entry name" value="HCP/CODH"/>
</dbReference>
<dbReference type="InterPro" id="IPR010048">
    <property type="entry name" value="Hydroxylam_reduct"/>
</dbReference>
<dbReference type="InterPro" id="IPR016099">
    <property type="entry name" value="Prismane-like_a/b-sand"/>
</dbReference>
<dbReference type="InterPro" id="IPR011254">
    <property type="entry name" value="Prismane-like_sf"/>
</dbReference>
<dbReference type="InterPro" id="IPR016100">
    <property type="entry name" value="Prismane_a-bundle"/>
</dbReference>
<dbReference type="NCBIfam" id="TIGR01703">
    <property type="entry name" value="hybrid_clust"/>
    <property type="match status" value="1"/>
</dbReference>
<dbReference type="NCBIfam" id="NF003658">
    <property type="entry name" value="PRK05290.1"/>
    <property type="match status" value="1"/>
</dbReference>
<dbReference type="PANTHER" id="PTHR30109">
    <property type="entry name" value="HYDROXYLAMINE REDUCTASE"/>
    <property type="match status" value="1"/>
</dbReference>
<dbReference type="PANTHER" id="PTHR30109:SF0">
    <property type="entry name" value="HYDROXYLAMINE REDUCTASE"/>
    <property type="match status" value="1"/>
</dbReference>
<dbReference type="Pfam" id="PF03063">
    <property type="entry name" value="Prismane"/>
    <property type="match status" value="1"/>
</dbReference>
<dbReference type="PIRSF" id="PIRSF000076">
    <property type="entry name" value="HCP"/>
    <property type="match status" value="1"/>
</dbReference>
<dbReference type="SUPFAM" id="SSF56821">
    <property type="entry name" value="Prismane protein-like"/>
    <property type="match status" value="1"/>
</dbReference>
<name>HCP_ACTPJ</name>
<keyword id="KW-0001">2Fe-2S</keyword>
<keyword id="KW-0963">Cytoplasm</keyword>
<keyword id="KW-0408">Iron</keyword>
<keyword id="KW-0411">Iron-sulfur</keyword>
<keyword id="KW-0479">Metal-binding</keyword>
<keyword id="KW-0560">Oxidoreductase</keyword>
<feature type="chain" id="PRO_1000092328" description="Hydroxylamine reductase">
    <location>
        <begin position="1"/>
        <end position="551"/>
    </location>
</feature>
<feature type="binding site" evidence="1">
    <location>
        <position position="3"/>
    </location>
    <ligand>
        <name>[2Fe-2S] cluster</name>
        <dbReference type="ChEBI" id="CHEBI:190135"/>
    </ligand>
</feature>
<feature type="binding site" evidence="1">
    <location>
        <position position="6"/>
    </location>
    <ligand>
        <name>[2Fe-2S] cluster</name>
        <dbReference type="ChEBI" id="CHEBI:190135"/>
    </ligand>
</feature>
<feature type="binding site" evidence="1">
    <location>
        <position position="18"/>
    </location>
    <ligand>
        <name>[2Fe-2S] cluster</name>
        <dbReference type="ChEBI" id="CHEBI:190135"/>
    </ligand>
</feature>
<feature type="binding site" evidence="1">
    <location>
        <position position="25"/>
    </location>
    <ligand>
        <name>[2Fe-2S] cluster</name>
        <dbReference type="ChEBI" id="CHEBI:190135"/>
    </ligand>
</feature>
<feature type="binding site" evidence="1">
    <location>
        <position position="249"/>
    </location>
    <ligand>
        <name>hybrid [4Fe-2O-2S] cluster</name>
        <dbReference type="ChEBI" id="CHEBI:60519"/>
    </ligand>
</feature>
<feature type="binding site" evidence="1">
    <location>
        <position position="273"/>
    </location>
    <ligand>
        <name>hybrid [4Fe-2O-2S] cluster</name>
        <dbReference type="ChEBI" id="CHEBI:60519"/>
    </ligand>
</feature>
<feature type="binding site" evidence="1">
    <location>
        <position position="317"/>
    </location>
    <ligand>
        <name>hybrid [4Fe-2O-2S] cluster</name>
        <dbReference type="ChEBI" id="CHEBI:60519"/>
    </ligand>
</feature>
<feature type="binding site" description="via persulfide group" evidence="1">
    <location>
        <position position="405"/>
    </location>
    <ligand>
        <name>hybrid [4Fe-2O-2S] cluster</name>
        <dbReference type="ChEBI" id="CHEBI:60519"/>
    </ligand>
</feature>
<feature type="binding site" evidence="1">
    <location>
        <position position="433"/>
    </location>
    <ligand>
        <name>hybrid [4Fe-2O-2S] cluster</name>
        <dbReference type="ChEBI" id="CHEBI:60519"/>
    </ligand>
</feature>
<feature type="binding site" evidence="1">
    <location>
        <position position="459"/>
    </location>
    <ligand>
        <name>hybrid [4Fe-2O-2S] cluster</name>
        <dbReference type="ChEBI" id="CHEBI:60519"/>
    </ligand>
</feature>
<feature type="binding site" evidence="1">
    <location>
        <position position="493"/>
    </location>
    <ligand>
        <name>hybrid [4Fe-2O-2S] cluster</name>
        <dbReference type="ChEBI" id="CHEBI:60519"/>
    </ligand>
</feature>
<feature type="binding site" evidence="1">
    <location>
        <position position="495"/>
    </location>
    <ligand>
        <name>hybrid [4Fe-2O-2S] cluster</name>
        <dbReference type="ChEBI" id="CHEBI:60519"/>
    </ligand>
</feature>
<feature type="modified residue" description="Cysteine persulfide" evidence="1">
    <location>
        <position position="405"/>
    </location>
</feature>
<evidence type="ECO:0000255" key="1">
    <source>
        <dbReference type="HAMAP-Rule" id="MF_00069"/>
    </source>
</evidence>
<reference key="1">
    <citation type="journal article" date="2008" name="PLoS ONE">
        <title>Genome biology of Actinobacillus pleuropneumoniae JL03, an isolate of serotype 3 prevalent in China.</title>
        <authorList>
            <person name="Xu Z."/>
            <person name="Zhou Y."/>
            <person name="Li L."/>
            <person name="Zhou R."/>
            <person name="Xiao S."/>
            <person name="Wan Y."/>
            <person name="Zhang S."/>
            <person name="Wang K."/>
            <person name="Li W."/>
            <person name="Li L."/>
            <person name="Jin H."/>
            <person name="Kang M."/>
            <person name="Dalai B."/>
            <person name="Li T."/>
            <person name="Liu L."/>
            <person name="Cheng Y."/>
            <person name="Zhang L."/>
            <person name="Xu T."/>
            <person name="Zheng H."/>
            <person name="Pu S."/>
            <person name="Wang B."/>
            <person name="Gu W."/>
            <person name="Zhang X.L."/>
            <person name="Zhu G.-F."/>
            <person name="Wang S."/>
            <person name="Zhao G.-P."/>
            <person name="Chen H."/>
        </authorList>
    </citation>
    <scope>NUCLEOTIDE SEQUENCE [LARGE SCALE GENOMIC DNA]</scope>
    <source>
        <strain>JL03</strain>
    </source>
</reference>
<protein>
    <recommendedName>
        <fullName evidence="1">Hydroxylamine reductase</fullName>
        <ecNumber evidence="1">1.7.99.1</ecNumber>
    </recommendedName>
    <alternativeName>
        <fullName evidence="1">Hybrid-cluster protein</fullName>
        <shortName evidence="1">HCP</shortName>
    </alternativeName>
    <alternativeName>
        <fullName evidence="1">Prismane protein</fullName>
    </alternativeName>
</protein>
<sequence>MYCVQCEQTMVTPMGNGCSFGQGMCGKTAETSDLQDLLIACLHSLSAWALKAREHGIINHDADNFAPRAFFATLTNVNFDSNRIVGYAQQAIIYRNELIKAISEVEPNPELNHPLAHIELKGISIDQLAEQAKEFALDTDRAEIGEEVHGVRLLALYGLKGAAAYLEHAYVLGKFDNDLYVEYHGFMAWLGTKPSDLNELLEKSLAIGSMNFKVMAMLDAGETETFGNPVPATVNIRPVKGKCILISGHDLKDLKELLEQTEGKGINVYTHGEMLPAHGYPELKKYKHLVGNYGSGWQNQQKEFARFPGAIVMTSNCLIDPNVGDYADRIFTCNIVGWPGVVHLEKHNFAPVIEKALECDGFPYTELEHYITVGFGRKTLIDASDAVIDLVKAGKLSHVFVIGGCDGDKEERHYYTDLAYALPKDTAVLTLGCGKYRFNKLDFGTIDGGLPRLLDAGQCNDTYSAIMLAVTLSQKLGIGLNELPLSIVLSWFEQKAIIVLLTLLALGVKNVYSGPSKPAFLNDNVMNLLHEKFGLSGLTTPEQDFGHIINK</sequence>
<organism>
    <name type="scientific">Actinobacillus pleuropneumoniae serotype 3 (strain JL03)</name>
    <dbReference type="NCBI Taxonomy" id="434271"/>
    <lineage>
        <taxon>Bacteria</taxon>
        <taxon>Pseudomonadati</taxon>
        <taxon>Pseudomonadota</taxon>
        <taxon>Gammaproteobacteria</taxon>
        <taxon>Pasteurellales</taxon>
        <taxon>Pasteurellaceae</taxon>
        <taxon>Actinobacillus</taxon>
    </lineage>
</organism>
<proteinExistence type="inferred from homology"/>
<gene>
    <name evidence="1" type="primary">hcp</name>
    <name type="ordered locus">APJL_1574</name>
</gene>
<accession>B0BRE1</accession>
<comment type="function">
    <text evidence="1">Catalyzes the reduction of hydroxylamine to form NH(3) and H(2)O.</text>
</comment>
<comment type="catalytic activity">
    <reaction evidence="1">
        <text>A + NH4(+) + H2O = hydroxylamine + AH2 + H(+)</text>
        <dbReference type="Rhea" id="RHEA:22052"/>
        <dbReference type="ChEBI" id="CHEBI:13193"/>
        <dbReference type="ChEBI" id="CHEBI:15377"/>
        <dbReference type="ChEBI" id="CHEBI:15378"/>
        <dbReference type="ChEBI" id="CHEBI:15429"/>
        <dbReference type="ChEBI" id="CHEBI:17499"/>
        <dbReference type="ChEBI" id="CHEBI:28938"/>
        <dbReference type="EC" id="1.7.99.1"/>
    </reaction>
</comment>
<comment type="cofactor">
    <cofactor evidence="1">
        <name>[2Fe-2S] cluster</name>
        <dbReference type="ChEBI" id="CHEBI:190135"/>
    </cofactor>
    <text evidence="1">Binds 1 [2Fe-2S] cluster.</text>
</comment>
<comment type="cofactor">
    <cofactor evidence="1">
        <name>hybrid [4Fe-2O-2S] cluster</name>
        <dbReference type="ChEBI" id="CHEBI:60519"/>
    </cofactor>
    <text evidence="1">Binds 1 hybrid [4Fe-2O-2S] cluster.</text>
</comment>
<comment type="subcellular location">
    <subcellularLocation>
        <location evidence="1">Cytoplasm</location>
    </subcellularLocation>
</comment>
<comment type="similarity">
    <text evidence="1">Belongs to the HCP family.</text>
</comment>